<comment type="function">
    <text evidence="1">Catalyzes the decarboxylation of oxaloacetate into pyruvate. Seems to play a role in maintaining cellular concentrations of bicarbonate and pyruvate.</text>
</comment>
<comment type="catalytic activity">
    <reaction evidence="1">
        <text>oxaloacetate + H(+) = pyruvate + CO2</text>
        <dbReference type="Rhea" id="RHEA:15641"/>
        <dbReference type="ChEBI" id="CHEBI:15361"/>
        <dbReference type="ChEBI" id="CHEBI:15378"/>
        <dbReference type="ChEBI" id="CHEBI:16452"/>
        <dbReference type="ChEBI" id="CHEBI:16526"/>
        <dbReference type="EC" id="4.1.1.112"/>
    </reaction>
</comment>
<comment type="cofactor">
    <cofactor evidence="1">
        <name>Mg(2+)</name>
        <dbReference type="ChEBI" id="CHEBI:18420"/>
    </cofactor>
    <text evidence="1">Binds 1 Mg(2+) ion per subunit.</text>
</comment>
<comment type="subunit">
    <text evidence="1">Homotetramer; dimer of dimers.</text>
</comment>
<comment type="similarity">
    <text evidence="2">Belongs to the isocitrate lyase/PEP mutase superfamily. Oxaloacetate decarboxylase family.</text>
</comment>
<accession>Q13Q00</accession>
<gene>
    <name type="ordered locus">Bxeno_B0871</name>
    <name type="ORF">Bxe_B2147</name>
</gene>
<organism>
    <name type="scientific">Paraburkholderia xenovorans (strain LB400)</name>
    <dbReference type="NCBI Taxonomy" id="266265"/>
    <lineage>
        <taxon>Bacteria</taxon>
        <taxon>Pseudomonadati</taxon>
        <taxon>Pseudomonadota</taxon>
        <taxon>Betaproteobacteria</taxon>
        <taxon>Burkholderiales</taxon>
        <taxon>Burkholderiaceae</taxon>
        <taxon>Paraburkholderia</taxon>
    </lineage>
</organism>
<name>OADC_PARXL</name>
<reference key="1">
    <citation type="journal article" date="2006" name="Proc. Natl. Acad. Sci. U.S.A.">
        <title>Burkholderia xenovorans LB400 harbors a multi-replicon, 9.73-Mbp genome shaped for versatility.</title>
        <authorList>
            <person name="Chain P.S.G."/>
            <person name="Denef V.J."/>
            <person name="Konstantinidis K.T."/>
            <person name="Vergez L.M."/>
            <person name="Agullo L."/>
            <person name="Reyes V.L."/>
            <person name="Hauser L."/>
            <person name="Cordova M."/>
            <person name="Gomez L."/>
            <person name="Gonzalez M."/>
            <person name="Land M."/>
            <person name="Lao V."/>
            <person name="Larimer F."/>
            <person name="LiPuma J.J."/>
            <person name="Mahenthiralingam E."/>
            <person name="Malfatti S.A."/>
            <person name="Marx C.J."/>
            <person name="Parnell J.J."/>
            <person name="Ramette A."/>
            <person name="Richardson P."/>
            <person name="Seeger M."/>
            <person name="Smith D."/>
            <person name="Spilker T."/>
            <person name="Sul W.J."/>
            <person name="Tsoi T.V."/>
            <person name="Ulrich L.E."/>
            <person name="Zhulin I.B."/>
            <person name="Tiedje J.M."/>
        </authorList>
    </citation>
    <scope>NUCLEOTIDE SEQUENCE [LARGE SCALE GENOMIC DNA]</scope>
    <source>
        <strain>LB400</strain>
    </source>
</reference>
<keyword id="KW-0210">Decarboxylase</keyword>
<keyword id="KW-0456">Lyase</keyword>
<keyword id="KW-0460">Magnesium</keyword>
<keyword id="KW-0479">Metal-binding</keyword>
<keyword id="KW-1185">Reference proteome</keyword>
<feature type="chain" id="PRO_0000364055" description="Oxaloacetate decarboxylase">
    <location>
        <begin position="1"/>
        <end position="299"/>
    </location>
</feature>
<feature type="binding site" evidence="1">
    <location>
        <position position="57"/>
    </location>
    <ligand>
        <name>substrate</name>
    </ligand>
</feature>
<feature type="binding site" evidence="1">
    <location>
        <position position="95"/>
    </location>
    <ligand>
        <name>Mg(2+)</name>
        <dbReference type="ChEBI" id="CHEBI:18420"/>
    </ligand>
</feature>
<feature type="binding site" evidence="1">
    <location>
        <position position="167"/>
    </location>
    <ligand>
        <name>substrate</name>
    </ligand>
</feature>
<feature type="binding site" evidence="1">
    <location>
        <position position="243"/>
    </location>
    <ligand>
        <name>substrate</name>
    </ligand>
</feature>
<sequence length="299" mass="31905">MLNEHGRRLLLGPTTQRRRLRQILDREDCVTMATIFDPVSARLAEQLGYEAGLMGGSLASYAVLGAPDLIVLTLTELAEQVHRCTRVSDVPLVVDGDHGYGNALSVMRTVHELDRAGAAAVTIEDTLLPRPYGSSGKPALVSFDEAVARVEAAVAARGDSDLLVLGRTSAATLNGIEDAVARFKAFEAAGVDAIFLPGPQQREQIDAISDAVKVPLLMAGAPEALCDPAYLATRRVKAWSAGHQTFSVALKALHDSMQLVRSGTLSLHLPGQASKQLLEQATGVPEYDEWTRQYLAGGA</sequence>
<dbReference type="EC" id="4.1.1.112" evidence="1"/>
<dbReference type="EMBL" id="CP000271">
    <property type="protein sequence ID" value="ABE33839.1"/>
    <property type="molecule type" value="Genomic_DNA"/>
</dbReference>
<dbReference type="SMR" id="Q13Q00"/>
<dbReference type="STRING" id="266265.Bxe_B2147"/>
<dbReference type="KEGG" id="bxe:Bxe_B2147"/>
<dbReference type="PATRIC" id="fig|266265.5.peg.5581"/>
<dbReference type="eggNOG" id="COG2513">
    <property type="taxonomic scope" value="Bacteria"/>
</dbReference>
<dbReference type="OrthoDB" id="9771433at2"/>
<dbReference type="Proteomes" id="UP000001817">
    <property type="component" value="Chromosome 2"/>
</dbReference>
<dbReference type="GO" id="GO:0000287">
    <property type="term" value="F:magnesium ion binding"/>
    <property type="evidence" value="ECO:0007669"/>
    <property type="project" value="UniProtKB-UniRule"/>
</dbReference>
<dbReference type="GO" id="GO:0046421">
    <property type="term" value="F:methylisocitrate lyase activity"/>
    <property type="evidence" value="ECO:0007669"/>
    <property type="project" value="TreeGrafter"/>
</dbReference>
<dbReference type="GO" id="GO:0008948">
    <property type="term" value="F:oxaloacetate decarboxylase activity"/>
    <property type="evidence" value="ECO:0007669"/>
    <property type="project" value="UniProtKB-UniRule"/>
</dbReference>
<dbReference type="GO" id="GO:0006107">
    <property type="term" value="P:oxaloacetate metabolic process"/>
    <property type="evidence" value="ECO:0007669"/>
    <property type="project" value="UniProtKB-UniRule"/>
</dbReference>
<dbReference type="GO" id="GO:0019629">
    <property type="term" value="P:propionate catabolic process, 2-methylcitrate cycle"/>
    <property type="evidence" value="ECO:0007669"/>
    <property type="project" value="TreeGrafter"/>
</dbReference>
<dbReference type="GO" id="GO:0042866">
    <property type="term" value="P:pyruvate biosynthetic process"/>
    <property type="evidence" value="ECO:0007669"/>
    <property type="project" value="UniProtKB-UniRule"/>
</dbReference>
<dbReference type="CDD" id="cd00377">
    <property type="entry name" value="ICL_PEPM"/>
    <property type="match status" value="1"/>
</dbReference>
<dbReference type="Gene3D" id="3.20.20.60">
    <property type="entry name" value="Phosphoenolpyruvate-binding domains"/>
    <property type="match status" value="1"/>
</dbReference>
<dbReference type="HAMAP" id="MF_01299">
    <property type="entry name" value="OadC"/>
    <property type="match status" value="1"/>
</dbReference>
<dbReference type="InterPro" id="IPR039556">
    <property type="entry name" value="ICL/PEPM"/>
</dbReference>
<dbReference type="InterPro" id="IPR023687">
    <property type="entry name" value="Oxaloacetate_deCOase_bac"/>
</dbReference>
<dbReference type="InterPro" id="IPR015813">
    <property type="entry name" value="Pyrv/PenolPyrv_kinase-like_dom"/>
</dbReference>
<dbReference type="InterPro" id="IPR040442">
    <property type="entry name" value="Pyrv_kinase-like_dom_sf"/>
</dbReference>
<dbReference type="PANTHER" id="PTHR42905:SF3">
    <property type="entry name" value="OXALOACETATE DECARBOXYLASE"/>
    <property type="match status" value="1"/>
</dbReference>
<dbReference type="PANTHER" id="PTHR42905">
    <property type="entry name" value="PHOSPHOENOLPYRUVATE CARBOXYLASE"/>
    <property type="match status" value="1"/>
</dbReference>
<dbReference type="Pfam" id="PF13714">
    <property type="entry name" value="PEP_mutase"/>
    <property type="match status" value="1"/>
</dbReference>
<dbReference type="SUPFAM" id="SSF51621">
    <property type="entry name" value="Phosphoenolpyruvate/pyruvate domain"/>
    <property type="match status" value="1"/>
</dbReference>
<proteinExistence type="inferred from homology"/>
<protein>
    <recommendedName>
        <fullName evidence="1">Oxaloacetate decarboxylase</fullName>
        <ecNumber evidence="1">4.1.1.112</ecNumber>
    </recommendedName>
</protein>
<evidence type="ECO:0000255" key="1">
    <source>
        <dbReference type="HAMAP-Rule" id="MF_01299"/>
    </source>
</evidence>
<evidence type="ECO:0000305" key="2"/>